<proteinExistence type="inferred from homology"/>
<gene>
    <name evidence="1" type="primary">cutC</name>
    <name type="ordered locus">CKO_01088</name>
</gene>
<dbReference type="EMBL" id="CP000822">
    <property type="protein sequence ID" value="ABV12231.1"/>
    <property type="molecule type" value="Genomic_DNA"/>
</dbReference>
<dbReference type="RefSeq" id="WP_012131985.1">
    <property type="nucleotide sequence ID" value="NC_009792.1"/>
</dbReference>
<dbReference type="SMR" id="A8AFG8"/>
<dbReference type="STRING" id="290338.CKO_01088"/>
<dbReference type="GeneID" id="45135238"/>
<dbReference type="KEGG" id="cko:CKO_01088"/>
<dbReference type="HOGENOM" id="CLU_050555_3_1_6"/>
<dbReference type="OrthoDB" id="9815677at2"/>
<dbReference type="Proteomes" id="UP000008148">
    <property type="component" value="Chromosome"/>
</dbReference>
<dbReference type="GO" id="GO:0005737">
    <property type="term" value="C:cytoplasm"/>
    <property type="evidence" value="ECO:0007669"/>
    <property type="project" value="UniProtKB-SubCell"/>
</dbReference>
<dbReference type="GO" id="GO:0005507">
    <property type="term" value="F:copper ion binding"/>
    <property type="evidence" value="ECO:0007669"/>
    <property type="project" value="TreeGrafter"/>
</dbReference>
<dbReference type="FunFam" id="3.20.20.380:FF:000001">
    <property type="entry name" value="Copper homeostasis protein CutC"/>
    <property type="match status" value="1"/>
</dbReference>
<dbReference type="Gene3D" id="3.20.20.380">
    <property type="entry name" value="Copper homeostasis (CutC) domain"/>
    <property type="match status" value="1"/>
</dbReference>
<dbReference type="HAMAP" id="MF_00795">
    <property type="entry name" value="CutC"/>
    <property type="match status" value="1"/>
</dbReference>
<dbReference type="InterPro" id="IPR005627">
    <property type="entry name" value="CutC-like"/>
</dbReference>
<dbReference type="InterPro" id="IPR036822">
    <property type="entry name" value="CutC-like_dom_sf"/>
</dbReference>
<dbReference type="NCBIfam" id="NF008603">
    <property type="entry name" value="PRK11572.1"/>
    <property type="match status" value="1"/>
</dbReference>
<dbReference type="PANTHER" id="PTHR12598">
    <property type="entry name" value="COPPER HOMEOSTASIS PROTEIN CUTC"/>
    <property type="match status" value="1"/>
</dbReference>
<dbReference type="PANTHER" id="PTHR12598:SF0">
    <property type="entry name" value="COPPER HOMEOSTASIS PROTEIN CUTC HOMOLOG"/>
    <property type="match status" value="1"/>
</dbReference>
<dbReference type="Pfam" id="PF03932">
    <property type="entry name" value="CutC"/>
    <property type="match status" value="1"/>
</dbReference>
<dbReference type="SUPFAM" id="SSF110395">
    <property type="entry name" value="CutC-like"/>
    <property type="match status" value="1"/>
</dbReference>
<feature type="chain" id="PRO_1000046934" description="PF03932 family protein CutC">
    <location>
        <begin position="1"/>
        <end position="248"/>
    </location>
</feature>
<comment type="subcellular location">
    <subcellularLocation>
        <location evidence="1">Cytoplasm</location>
    </subcellularLocation>
</comment>
<comment type="similarity">
    <text evidence="1">Belongs to the CutC family.</text>
</comment>
<comment type="caution">
    <text evidence="1">Once thought to be involved in copper homeostasis, experiments in E.coli have shown this is not the case.</text>
</comment>
<evidence type="ECO:0000255" key="1">
    <source>
        <dbReference type="HAMAP-Rule" id="MF_00795"/>
    </source>
</evidence>
<sequence length="248" mass="26450">MALLEICCYSMECALTAQQNGADRIELCAAPKEGGLTPSLGVLRTVRQHVAIAVHPIIRPRGGDFCYTDGEFAAMLEDVRTVRELGFPGLVTGVLDVDGNVDLARMEKIMAAAGPLAVTFHRAFDMCANPFNALKNLADLGVARVLTSGQKSDAVHGLPIIMELIAQGDAPIIMAGAGVRSENLQRFLDAGVQEVHSSAGAWQASPMRYRNHGLSMSTDAQADEYSRYAVDGAAVAEMKGVIVRHQAN</sequence>
<name>CUTC_CITK8</name>
<organism>
    <name type="scientific">Citrobacter koseri (strain ATCC BAA-895 / CDC 4225-83 / SGSC4696)</name>
    <dbReference type="NCBI Taxonomy" id="290338"/>
    <lineage>
        <taxon>Bacteria</taxon>
        <taxon>Pseudomonadati</taxon>
        <taxon>Pseudomonadota</taxon>
        <taxon>Gammaproteobacteria</taxon>
        <taxon>Enterobacterales</taxon>
        <taxon>Enterobacteriaceae</taxon>
        <taxon>Citrobacter</taxon>
    </lineage>
</organism>
<keyword id="KW-0963">Cytoplasm</keyword>
<keyword id="KW-1185">Reference proteome</keyword>
<reference key="1">
    <citation type="submission" date="2007-08" db="EMBL/GenBank/DDBJ databases">
        <authorList>
            <consortium name="The Citrobacter koseri Genome Sequencing Project"/>
            <person name="McClelland M."/>
            <person name="Sanderson E.K."/>
            <person name="Porwollik S."/>
            <person name="Spieth J."/>
            <person name="Clifton W.S."/>
            <person name="Latreille P."/>
            <person name="Courtney L."/>
            <person name="Wang C."/>
            <person name="Pepin K."/>
            <person name="Bhonagiri V."/>
            <person name="Nash W."/>
            <person name="Johnson M."/>
            <person name="Thiruvilangam P."/>
            <person name="Wilson R."/>
        </authorList>
    </citation>
    <scope>NUCLEOTIDE SEQUENCE [LARGE SCALE GENOMIC DNA]</scope>
    <source>
        <strain>ATCC BAA-895 / CDC 4225-83 / SGSC4696</strain>
    </source>
</reference>
<accession>A8AFG8</accession>
<protein>
    <recommendedName>
        <fullName evidence="1">PF03932 family protein CutC</fullName>
    </recommendedName>
</protein>